<accession>Q9Y676</accession>
<accession>A6NDQ0</accession>
<accession>Q659G4</accession>
<accession>Q9BS27</accession>
<reference evidence="8" key="1">
    <citation type="submission" date="1998-10" db="EMBL/GenBank/DDBJ databases">
        <authorList>
            <person name="Zhang Q.H."/>
            <person name="Guan Z.Q."/>
            <person name="Dai M."/>
            <person name="Song H."/>
            <person name="Mao Y.F."/>
            <person name="Wu X.Y."/>
            <person name="Mao M."/>
            <person name="Fu G."/>
            <person name="Luo M."/>
            <person name="Chen J.H."/>
            <person name="Hu R."/>
        </authorList>
    </citation>
    <scope>NUCLEOTIDE SEQUENCE [LARGE SCALE MRNA]</scope>
    <source>
        <tissue>Pituitary tumor</tissue>
    </source>
</reference>
<reference key="2">
    <citation type="journal article" date="2000" name="Genome Res.">
        <title>Cloning and functional analysis of cDNAs with open reading frames for 300 previously undefined genes expressed in CD34+ hematopoietic stem/progenitor cells.</title>
        <authorList>
            <person name="Zhang Q.-H."/>
            <person name="Ye M."/>
            <person name="Wu X.-Y."/>
            <person name="Ren S.-X."/>
            <person name="Zhao M."/>
            <person name="Zhao C.-J."/>
            <person name="Fu G."/>
            <person name="Shen Y."/>
            <person name="Fan H.-Y."/>
            <person name="Lu G."/>
            <person name="Zhong M."/>
            <person name="Xu X.-R."/>
            <person name="Han Z.-G."/>
            <person name="Zhang J.-W."/>
            <person name="Tao J."/>
            <person name="Huang Q.-H."/>
            <person name="Zhou J."/>
            <person name="Hu G.-X."/>
            <person name="Gu J."/>
            <person name="Chen S.-J."/>
            <person name="Chen Z."/>
        </authorList>
    </citation>
    <scope>NUCLEOTIDE SEQUENCE [LARGE SCALE MRNA]</scope>
    <source>
        <tissue>Umbilical cord blood</tissue>
    </source>
</reference>
<reference key="3">
    <citation type="journal article" date="2007" name="BMC Genomics">
        <title>The full-ORF clone resource of the German cDNA consortium.</title>
        <authorList>
            <person name="Bechtel S."/>
            <person name="Rosenfelder H."/>
            <person name="Duda A."/>
            <person name="Schmidt C.P."/>
            <person name="Ernst U."/>
            <person name="Wellenreuther R."/>
            <person name="Mehrle A."/>
            <person name="Schuster C."/>
            <person name="Bahr A."/>
            <person name="Bloecker H."/>
            <person name="Heubner D."/>
            <person name="Hoerlein A."/>
            <person name="Michel G."/>
            <person name="Wedler H."/>
            <person name="Koehrer K."/>
            <person name="Ottenwaelder B."/>
            <person name="Poustka A."/>
            <person name="Wiemann S."/>
            <person name="Schupp I."/>
        </authorList>
    </citation>
    <scope>NUCLEOTIDE SEQUENCE [LARGE SCALE MRNA]</scope>
    <source>
        <tissue>Brain</tissue>
    </source>
</reference>
<reference key="4">
    <citation type="journal article" date="2006" name="Genetics">
        <title>Rapid evolution of major histocompatibility complex class I genes in primates generates new disease alleles in humans via hitchhiking diversity.</title>
        <authorList>
            <person name="Shiina T."/>
            <person name="Ota M."/>
            <person name="Shimizu S."/>
            <person name="Katsuyama Y."/>
            <person name="Hashimoto N."/>
            <person name="Takasu M."/>
            <person name="Anzai T."/>
            <person name="Kulski J.K."/>
            <person name="Kikkawa E."/>
            <person name="Naruse T."/>
            <person name="Kimura N."/>
            <person name="Yanagiya K."/>
            <person name="Watanabe A."/>
            <person name="Hosomichi K."/>
            <person name="Kohara S."/>
            <person name="Iwamoto C."/>
            <person name="Umehara Y."/>
            <person name="Meyer A."/>
            <person name="Wanner V."/>
            <person name="Sano K."/>
            <person name="Macquin C."/>
            <person name="Ikeo K."/>
            <person name="Tokunaga K."/>
            <person name="Gojobori T."/>
            <person name="Inoko H."/>
            <person name="Bahram S."/>
        </authorList>
    </citation>
    <scope>NUCLEOTIDE SEQUENCE [LARGE SCALE GENOMIC DNA]</scope>
    <source>
        <tissue>Peripheral blood leukocyte</tissue>
    </source>
</reference>
<reference key="5">
    <citation type="journal article" date="2003" name="Nature">
        <title>The DNA sequence and analysis of human chromosome 6.</title>
        <authorList>
            <person name="Mungall A.J."/>
            <person name="Palmer S.A."/>
            <person name="Sims S.K."/>
            <person name="Edwards C.A."/>
            <person name="Ashurst J.L."/>
            <person name="Wilming L."/>
            <person name="Jones M.C."/>
            <person name="Horton R."/>
            <person name="Hunt S.E."/>
            <person name="Scott C.E."/>
            <person name="Gilbert J.G.R."/>
            <person name="Clamp M.E."/>
            <person name="Bethel G."/>
            <person name="Milne S."/>
            <person name="Ainscough R."/>
            <person name="Almeida J.P."/>
            <person name="Ambrose K.D."/>
            <person name="Andrews T.D."/>
            <person name="Ashwell R.I.S."/>
            <person name="Babbage A.K."/>
            <person name="Bagguley C.L."/>
            <person name="Bailey J."/>
            <person name="Banerjee R."/>
            <person name="Barker D.J."/>
            <person name="Barlow K.F."/>
            <person name="Bates K."/>
            <person name="Beare D.M."/>
            <person name="Beasley H."/>
            <person name="Beasley O."/>
            <person name="Bird C.P."/>
            <person name="Blakey S.E."/>
            <person name="Bray-Allen S."/>
            <person name="Brook J."/>
            <person name="Brown A.J."/>
            <person name="Brown J.Y."/>
            <person name="Burford D.C."/>
            <person name="Burrill W."/>
            <person name="Burton J."/>
            <person name="Carder C."/>
            <person name="Carter N.P."/>
            <person name="Chapman J.C."/>
            <person name="Clark S.Y."/>
            <person name="Clark G."/>
            <person name="Clee C.M."/>
            <person name="Clegg S."/>
            <person name="Cobley V."/>
            <person name="Collier R.E."/>
            <person name="Collins J.E."/>
            <person name="Colman L.K."/>
            <person name="Corby N.R."/>
            <person name="Coville G.J."/>
            <person name="Culley K.M."/>
            <person name="Dhami P."/>
            <person name="Davies J."/>
            <person name="Dunn M."/>
            <person name="Earthrowl M.E."/>
            <person name="Ellington A.E."/>
            <person name="Evans K.A."/>
            <person name="Faulkner L."/>
            <person name="Francis M.D."/>
            <person name="Frankish A."/>
            <person name="Frankland J."/>
            <person name="French L."/>
            <person name="Garner P."/>
            <person name="Garnett J."/>
            <person name="Ghori M.J."/>
            <person name="Gilby L.M."/>
            <person name="Gillson C.J."/>
            <person name="Glithero R.J."/>
            <person name="Grafham D.V."/>
            <person name="Grant M."/>
            <person name="Gribble S."/>
            <person name="Griffiths C."/>
            <person name="Griffiths M.N.D."/>
            <person name="Hall R."/>
            <person name="Halls K.S."/>
            <person name="Hammond S."/>
            <person name="Harley J.L."/>
            <person name="Hart E.A."/>
            <person name="Heath P.D."/>
            <person name="Heathcott R."/>
            <person name="Holmes S.J."/>
            <person name="Howden P.J."/>
            <person name="Howe K.L."/>
            <person name="Howell G.R."/>
            <person name="Huckle E."/>
            <person name="Humphray S.J."/>
            <person name="Humphries M.D."/>
            <person name="Hunt A.R."/>
            <person name="Johnson C.M."/>
            <person name="Joy A.A."/>
            <person name="Kay M."/>
            <person name="Keenan S.J."/>
            <person name="Kimberley A.M."/>
            <person name="King A."/>
            <person name="Laird G.K."/>
            <person name="Langford C."/>
            <person name="Lawlor S."/>
            <person name="Leongamornlert D.A."/>
            <person name="Leversha M."/>
            <person name="Lloyd C.R."/>
            <person name="Lloyd D.M."/>
            <person name="Loveland J.E."/>
            <person name="Lovell J."/>
            <person name="Martin S."/>
            <person name="Mashreghi-Mohammadi M."/>
            <person name="Maslen G.L."/>
            <person name="Matthews L."/>
            <person name="McCann O.T."/>
            <person name="McLaren S.J."/>
            <person name="McLay K."/>
            <person name="McMurray A."/>
            <person name="Moore M.J.F."/>
            <person name="Mullikin J.C."/>
            <person name="Niblett D."/>
            <person name="Nickerson T."/>
            <person name="Novik K.L."/>
            <person name="Oliver K."/>
            <person name="Overton-Larty E.K."/>
            <person name="Parker A."/>
            <person name="Patel R."/>
            <person name="Pearce A.V."/>
            <person name="Peck A.I."/>
            <person name="Phillimore B.J.C.T."/>
            <person name="Phillips S."/>
            <person name="Plumb R.W."/>
            <person name="Porter K.M."/>
            <person name="Ramsey Y."/>
            <person name="Ranby S.A."/>
            <person name="Rice C.M."/>
            <person name="Ross M.T."/>
            <person name="Searle S.M."/>
            <person name="Sehra H.K."/>
            <person name="Sheridan E."/>
            <person name="Skuce C.D."/>
            <person name="Smith S."/>
            <person name="Smith M."/>
            <person name="Spraggon L."/>
            <person name="Squares S.L."/>
            <person name="Steward C.A."/>
            <person name="Sycamore N."/>
            <person name="Tamlyn-Hall G."/>
            <person name="Tester J."/>
            <person name="Theaker A.J."/>
            <person name="Thomas D.W."/>
            <person name="Thorpe A."/>
            <person name="Tracey A."/>
            <person name="Tromans A."/>
            <person name="Tubby B."/>
            <person name="Wall M."/>
            <person name="Wallis J.M."/>
            <person name="West A.P."/>
            <person name="White S.S."/>
            <person name="Whitehead S.L."/>
            <person name="Whittaker H."/>
            <person name="Wild A."/>
            <person name="Willey D.J."/>
            <person name="Wilmer T.E."/>
            <person name="Wood J.M."/>
            <person name="Wray P.W."/>
            <person name="Wyatt J.C."/>
            <person name="Young L."/>
            <person name="Younger R.M."/>
            <person name="Bentley D.R."/>
            <person name="Coulson A."/>
            <person name="Durbin R.M."/>
            <person name="Hubbard T."/>
            <person name="Sulston J.E."/>
            <person name="Dunham I."/>
            <person name="Rogers J."/>
            <person name="Beck S."/>
        </authorList>
    </citation>
    <scope>NUCLEOTIDE SEQUENCE [LARGE SCALE GENOMIC DNA]</scope>
</reference>
<reference evidence="8" key="6">
    <citation type="submission" date="2005-07" db="EMBL/GenBank/DDBJ databases">
        <authorList>
            <person name="Mural R.J."/>
            <person name="Istrail S."/>
            <person name="Sutton G.G."/>
            <person name="Florea L."/>
            <person name="Halpern A.L."/>
            <person name="Mobarry C.M."/>
            <person name="Lippert R."/>
            <person name="Walenz B."/>
            <person name="Shatkay H."/>
            <person name="Dew I."/>
            <person name="Miller J.R."/>
            <person name="Flanigan M.J."/>
            <person name="Edwards N.J."/>
            <person name="Bolanos R."/>
            <person name="Fasulo D."/>
            <person name="Halldorsson B.V."/>
            <person name="Hannenhalli S."/>
            <person name="Turner R."/>
            <person name="Yooseph S."/>
            <person name="Lu F."/>
            <person name="Nusskern D.R."/>
            <person name="Shue B.C."/>
            <person name="Zheng X.H."/>
            <person name="Zhong F."/>
            <person name="Delcher A.L."/>
            <person name="Huson D.H."/>
            <person name="Kravitz S.A."/>
            <person name="Mouchard L."/>
            <person name="Reinert K."/>
            <person name="Remington K.A."/>
            <person name="Clark A.G."/>
            <person name="Waterman M.S."/>
            <person name="Eichler E.E."/>
            <person name="Adams M.D."/>
            <person name="Hunkapiller M.W."/>
            <person name="Myers E.W."/>
            <person name="Venter J.C."/>
        </authorList>
    </citation>
    <scope>NUCLEOTIDE SEQUENCE [LARGE SCALE GENOMIC DNA]</scope>
</reference>
<reference key="7">
    <citation type="journal article" date="2004" name="Genome Res.">
        <title>The status, quality, and expansion of the NIH full-length cDNA project: the Mammalian Gene Collection (MGC).</title>
        <authorList>
            <consortium name="The MGC Project Team"/>
        </authorList>
    </citation>
    <scope>NUCLEOTIDE SEQUENCE [LARGE SCALE MRNA]</scope>
    <source>
        <tissue>Heart</tissue>
    </source>
</reference>
<reference evidence="6" key="8">
    <citation type="journal article" date="2001" name="J. Biol. Chem.">
        <title>The small subunit of the mammalian mitochondrial ribosome: identification of the full complement of ribosomal proteins present.</title>
        <authorList>
            <person name="Koc E.C."/>
            <person name="Burkhart W."/>
            <person name="Blackburn K."/>
            <person name="Moseley A."/>
            <person name="Spremulli L.L."/>
        </authorList>
    </citation>
    <scope>IDENTIFICATION</scope>
</reference>
<reference key="9">
    <citation type="journal article" date="2008" name="Mol. Cell">
        <title>Kinase-selective enrichment enables quantitative phosphoproteomics of the kinome across the cell cycle.</title>
        <authorList>
            <person name="Daub H."/>
            <person name="Olsen J.V."/>
            <person name="Bairlein M."/>
            <person name="Gnad F."/>
            <person name="Oppermann F.S."/>
            <person name="Korner R."/>
            <person name="Greff Z."/>
            <person name="Keri G."/>
            <person name="Stemmann O."/>
            <person name="Mann M."/>
        </authorList>
    </citation>
    <scope>IDENTIFICATION BY MASS SPECTROMETRY [LARGE SCALE ANALYSIS]</scope>
    <source>
        <tissue>Cervix carcinoma</tissue>
    </source>
</reference>
<reference key="10">
    <citation type="journal article" date="2011" name="BMC Syst. Biol.">
        <title>Initial characterization of the human central proteome.</title>
        <authorList>
            <person name="Burkard T.R."/>
            <person name="Planyavsky M."/>
            <person name="Kaupe I."/>
            <person name="Breitwieser F.P."/>
            <person name="Buerckstuemmer T."/>
            <person name="Bennett K.L."/>
            <person name="Superti-Furga G."/>
            <person name="Colinge J."/>
        </authorList>
    </citation>
    <scope>IDENTIFICATION BY MASS SPECTROMETRY [LARGE SCALE ANALYSIS]</scope>
</reference>
<reference key="11">
    <citation type="journal article" date="2013" name="J. Proteome Res.">
        <title>Toward a comprehensive characterization of a human cancer cell phosphoproteome.</title>
        <authorList>
            <person name="Zhou H."/>
            <person name="Di Palma S."/>
            <person name="Preisinger C."/>
            <person name="Peng M."/>
            <person name="Polat A.N."/>
            <person name="Heck A.J."/>
            <person name="Mohammed S."/>
        </authorList>
    </citation>
    <scope>PHOSPHORYLATION [LARGE SCALE ANALYSIS] AT SER-38 AND SER-49</scope>
    <scope>IDENTIFICATION BY MASS SPECTROMETRY [LARGE SCALE ANALYSIS]</scope>
    <source>
        <tissue>Erythroleukemia</tissue>
    </source>
</reference>
<reference key="12">
    <citation type="journal article" date="2015" name="Proteomics">
        <title>N-terminome analysis of the human mitochondrial proteome.</title>
        <authorList>
            <person name="Vaca Jacome A.S."/>
            <person name="Rabilloud T."/>
            <person name="Schaeffer-Reiss C."/>
            <person name="Rompais M."/>
            <person name="Ayoub D."/>
            <person name="Lane L."/>
            <person name="Bairoch A."/>
            <person name="Van Dorsselaer A."/>
            <person name="Carapito C."/>
        </authorList>
    </citation>
    <scope>IDENTIFICATION BY MASS SPECTROMETRY [LARGE SCALE ANALYSIS]</scope>
</reference>
<reference key="13">
    <citation type="journal article" date="2016" name="Annu. Rev. Biochem.">
        <title>Structure and function of the mitochondrial ribosome.</title>
        <authorList>
            <person name="Greber B.J."/>
            <person name="Ban N."/>
        </authorList>
    </citation>
    <scope>NOMENCLATURE</scope>
</reference>
<reference evidence="9" key="14">
    <citation type="journal article" date="2015" name="Science">
        <title>Ribosome. The structure of the human mitochondrial ribosome.</title>
        <authorList>
            <person name="Amunts A."/>
            <person name="Brown A."/>
            <person name="Toots J."/>
            <person name="Scheres S.H."/>
            <person name="Ramakrishnan V."/>
        </authorList>
    </citation>
    <scope>STRUCTURE BY ELECTRON MICROSCOPY (3.50 ANGSTROMS)</scope>
    <scope>SUBCELLULAR LOCATION</scope>
    <scope>SUBUNIT</scope>
</reference>
<gene>
    <name type="primary">MRPS18B</name>
    <name type="synonym">C6orf14</name>
    <name type="ORF">HSPC183</name>
    <name type="ORF">PTD017</name>
</gene>
<keyword id="KW-0002">3D-structure</keyword>
<keyword id="KW-0496">Mitochondrion</keyword>
<keyword id="KW-0597">Phosphoprotein</keyword>
<keyword id="KW-1267">Proteomics identification</keyword>
<keyword id="KW-1185">Reference proteome</keyword>
<keyword id="KW-0687">Ribonucleoprotein</keyword>
<keyword id="KW-0689">Ribosomal protein</keyword>
<keyword id="KW-0809">Transit peptide</keyword>
<organism evidence="8">
    <name type="scientific">Homo sapiens</name>
    <name type="common">Human</name>
    <dbReference type="NCBI Taxonomy" id="9606"/>
    <lineage>
        <taxon>Eukaryota</taxon>
        <taxon>Metazoa</taxon>
        <taxon>Chordata</taxon>
        <taxon>Craniata</taxon>
        <taxon>Vertebrata</taxon>
        <taxon>Euteleostomi</taxon>
        <taxon>Mammalia</taxon>
        <taxon>Eutheria</taxon>
        <taxon>Euarchontoglires</taxon>
        <taxon>Primates</taxon>
        <taxon>Haplorrhini</taxon>
        <taxon>Catarrhini</taxon>
        <taxon>Hominidae</taxon>
        <taxon>Homo</taxon>
    </lineage>
</organism>
<protein>
    <recommendedName>
        <fullName evidence="5">Small ribosomal subunit protein mS40</fullName>
    </recommendedName>
    <alternativeName>
        <fullName>28S ribosomal protein S18-2, mitochondrial</fullName>
        <shortName>MRP-S18-2</shortName>
    </alternativeName>
    <alternativeName>
        <fullName>28S ribosomal protein S18b, mitochondrial</fullName>
        <shortName>MRP-S18-b</shortName>
        <shortName>Mrps18-b</shortName>
        <shortName>S18mt-b</shortName>
    </alternativeName>
    <alternativeName>
        <fullName evidence="4">Small ribosomal subunit protein bS18b</fullName>
    </alternativeName>
</protein>
<name>RT18B_HUMAN</name>
<dbReference type="EMBL" id="AF100761">
    <property type="protein sequence ID" value="AAD43025.1"/>
    <property type="molecule type" value="mRNA"/>
</dbReference>
<dbReference type="EMBL" id="AF151017">
    <property type="protein sequence ID" value="AAF36103.1"/>
    <property type="molecule type" value="mRNA"/>
</dbReference>
<dbReference type="EMBL" id="AL050361">
    <property type="protein sequence ID" value="CAH56415.1"/>
    <property type="molecule type" value="mRNA"/>
</dbReference>
<dbReference type="EMBL" id="AB110933">
    <property type="protein sequence ID" value="BAD13699.1"/>
    <property type="molecule type" value="Genomic_DNA"/>
</dbReference>
<dbReference type="EMBL" id="AB110934">
    <property type="protein sequence ID" value="BAD13700.1"/>
    <property type="molecule type" value="Genomic_DNA"/>
</dbReference>
<dbReference type="EMBL" id="AB202094">
    <property type="protein sequence ID" value="BAE78614.1"/>
    <property type="molecule type" value="Genomic_DNA"/>
</dbReference>
<dbReference type="EMBL" id="AL662800">
    <property type="status" value="NOT_ANNOTATED_CDS"/>
    <property type="molecule type" value="Genomic_DNA"/>
</dbReference>
<dbReference type="EMBL" id="AL662825">
    <property type="status" value="NOT_ANNOTATED_CDS"/>
    <property type="molecule type" value="Genomic_DNA"/>
</dbReference>
<dbReference type="EMBL" id="AL732442">
    <property type="status" value="NOT_ANNOTATED_CDS"/>
    <property type="molecule type" value="Genomic_DNA"/>
</dbReference>
<dbReference type="EMBL" id="BX119957">
    <property type="status" value="NOT_ANNOTATED_CDS"/>
    <property type="molecule type" value="Genomic_DNA"/>
</dbReference>
<dbReference type="EMBL" id="AL845353">
    <property type="status" value="NOT_ANNOTATED_CDS"/>
    <property type="molecule type" value="Genomic_DNA"/>
</dbReference>
<dbReference type="EMBL" id="BX248507">
    <property type="status" value="NOT_ANNOTATED_CDS"/>
    <property type="molecule type" value="Genomic_DNA"/>
</dbReference>
<dbReference type="EMBL" id="CR753328">
    <property type="status" value="NOT_ANNOTATED_CDS"/>
    <property type="molecule type" value="Genomic_DNA"/>
</dbReference>
<dbReference type="EMBL" id="CH471081">
    <property type="protein sequence ID" value="EAX03304.1"/>
    <property type="molecule type" value="Genomic_DNA"/>
</dbReference>
<dbReference type="EMBL" id="BC005373">
    <property type="protein sequence ID" value="AAH05373.1"/>
    <property type="molecule type" value="mRNA"/>
</dbReference>
<dbReference type="CCDS" id="CCDS4682.1"/>
<dbReference type="RefSeq" id="NP_054765.1">
    <property type="nucleotide sequence ID" value="NM_014046.4"/>
</dbReference>
<dbReference type="PDB" id="3J9M">
    <property type="method" value="EM"/>
    <property type="resolution" value="3.50 A"/>
    <property type="chains" value="AO=1-258"/>
</dbReference>
<dbReference type="PDB" id="6NU2">
    <property type="method" value="EM"/>
    <property type="resolution" value="3.90 A"/>
    <property type="chains" value="AO=52-236"/>
</dbReference>
<dbReference type="PDB" id="6NU3">
    <property type="method" value="EM"/>
    <property type="resolution" value="4.40 A"/>
    <property type="chains" value="AO=52-236"/>
</dbReference>
<dbReference type="PDB" id="6RW4">
    <property type="method" value="EM"/>
    <property type="resolution" value="2.97 A"/>
    <property type="chains" value="O=1-258"/>
</dbReference>
<dbReference type="PDB" id="6RW5">
    <property type="method" value="EM"/>
    <property type="resolution" value="3.14 A"/>
    <property type="chains" value="O=1-258"/>
</dbReference>
<dbReference type="PDB" id="6VLZ">
    <property type="method" value="EM"/>
    <property type="resolution" value="2.97 A"/>
    <property type="chains" value="AO=1-258"/>
</dbReference>
<dbReference type="PDB" id="6VMI">
    <property type="method" value="EM"/>
    <property type="resolution" value="2.96 A"/>
    <property type="chains" value="AO=1-258"/>
</dbReference>
<dbReference type="PDB" id="6ZM5">
    <property type="method" value="EM"/>
    <property type="resolution" value="2.89 A"/>
    <property type="chains" value="AO=1-258"/>
</dbReference>
<dbReference type="PDB" id="6ZM6">
    <property type="method" value="EM"/>
    <property type="resolution" value="2.59 A"/>
    <property type="chains" value="AO=1-258"/>
</dbReference>
<dbReference type="PDB" id="6ZS9">
    <property type="method" value="EM"/>
    <property type="resolution" value="4.00 A"/>
    <property type="chains" value="AO=1-258"/>
</dbReference>
<dbReference type="PDB" id="6ZSA">
    <property type="method" value="EM"/>
    <property type="resolution" value="4.00 A"/>
    <property type="chains" value="AO=1-258"/>
</dbReference>
<dbReference type="PDB" id="6ZSB">
    <property type="method" value="EM"/>
    <property type="resolution" value="4.50 A"/>
    <property type="chains" value="AO=1-258"/>
</dbReference>
<dbReference type="PDB" id="6ZSC">
    <property type="method" value="EM"/>
    <property type="resolution" value="3.50 A"/>
    <property type="chains" value="AO=1-258"/>
</dbReference>
<dbReference type="PDB" id="6ZSD">
    <property type="method" value="EM"/>
    <property type="resolution" value="3.70 A"/>
    <property type="chains" value="AO=1-258"/>
</dbReference>
<dbReference type="PDB" id="6ZSE">
    <property type="method" value="EM"/>
    <property type="resolution" value="5.00 A"/>
    <property type="chains" value="AO=1-236"/>
</dbReference>
<dbReference type="PDB" id="6ZSG">
    <property type="method" value="EM"/>
    <property type="resolution" value="4.00 A"/>
    <property type="chains" value="AO=1-258"/>
</dbReference>
<dbReference type="PDB" id="7A5F">
    <property type="method" value="EM"/>
    <property type="resolution" value="4.40 A"/>
    <property type="chains" value="O6=1-258"/>
</dbReference>
<dbReference type="PDB" id="7A5G">
    <property type="method" value="EM"/>
    <property type="resolution" value="4.33 A"/>
    <property type="chains" value="O6=1-258"/>
</dbReference>
<dbReference type="PDB" id="7A5I">
    <property type="method" value="EM"/>
    <property type="resolution" value="3.70 A"/>
    <property type="chains" value="O6=1-258"/>
</dbReference>
<dbReference type="PDB" id="7A5K">
    <property type="method" value="EM"/>
    <property type="resolution" value="3.70 A"/>
    <property type="chains" value="O6=1-258"/>
</dbReference>
<dbReference type="PDB" id="7L08">
    <property type="method" value="EM"/>
    <property type="resolution" value="3.49 A"/>
    <property type="chains" value="AO=1-258"/>
</dbReference>
<dbReference type="PDB" id="7OG4">
    <property type="method" value="EM"/>
    <property type="resolution" value="3.80 A"/>
    <property type="chains" value="AO=1-258"/>
</dbReference>
<dbReference type="PDB" id="7P2E">
    <property type="method" value="EM"/>
    <property type="resolution" value="2.40 A"/>
    <property type="chains" value="O=1-258"/>
</dbReference>
<dbReference type="PDB" id="7PNX">
    <property type="method" value="EM"/>
    <property type="resolution" value="2.76 A"/>
    <property type="chains" value="O=1-258"/>
</dbReference>
<dbReference type="PDB" id="7PNY">
    <property type="method" value="EM"/>
    <property type="resolution" value="3.06 A"/>
    <property type="chains" value="O=1-258"/>
</dbReference>
<dbReference type="PDB" id="7PNZ">
    <property type="method" value="EM"/>
    <property type="resolution" value="3.09 A"/>
    <property type="chains" value="O=1-258"/>
</dbReference>
<dbReference type="PDB" id="7PO0">
    <property type="method" value="EM"/>
    <property type="resolution" value="2.90 A"/>
    <property type="chains" value="O=1-258"/>
</dbReference>
<dbReference type="PDB" id="7PO1">
    <property type="method" value="EM"/>
    <property type="resolution" value="2.92 A"/>
    <property type="chains" value="O=1-258"/>
</dbReference>
<dbReference type="PDB" id="7PO2">
    <property type="method" value="EM"/>
    <property type="resolution" value="3.09 A"/>
    <property type="chains" value="O=1-258"/>
</dbReference>
<dbReference type="PDB" id="7PO3">
    <property type="method" value="EM"/>
    <property type="resolution" value="2.92 A"/>
    <property type="chains" value="O=1-258"/>
</dbReference>
<dbReference type="PDB" id="7QI4">
    <property type="method" value="EM"/>
    <property type="resolution" value="2.21 A"/>
    <property type="chains" value="AO=1-258"/>
</dbReference>
<dbReference type="PDB" id="7QI5">
    <property type="method" value="EM"/>
    <property type="resolution" value="2.63 A"/>
    <property type="chains" value="AO=1-258"/>
</dbReference>
<dbReference type="PDB" id="7QI6">
    <property type="method" value="EM"/>
    <property type="resolution" value="2.98 A"/>
    <property type="chains" value="AO=1-258"/>
</dbReference>
<dbReference type="PDB" id="8ANY">
    <property type="method" value="EM"/>
    <property type="resolution" value="2.85 A"/>
    <property type="chains" value="AO=1-258"/>
</dbReference>
<dbReference type="PDB" id="8CSP">
    <property type="method" value="EM"/>
    <property type="resolution" value="2.66 A"/>
    <property type="chains" value="O=1-258"/>
</dbReference>
<dbReference type="PDB" id="8CSQ">
    <property type="method" value="EM"/>
    <property type="resolution" value="2.54 A"/>
    <property type="chains" value="O=1-258"/>
</dbReference>
<dbReference type="PDB" id="8CSR">
    <property type="method" value="EM"/>
    <property type="resolution" value="2.54 A"/>
    <property type="chains" value="O=1-258"/>
</dbReference>
<dbReference type="PDB" id="8CSS">
    <property type="method" value="EM"/>
    <property type="resolution" value="2.36 A"/>
    <property type="chains" value="O=1-258"/>
</dbReference>
<dbReference type="PDB" id="8CST">
    <property type="method" value="EM"/>
    <property type="resolution" value="2.85 A"/>
    <property type="chains" value="O=1-258"/>
</dbReference>
<dbReference type="PDB" id="8CSU">
    <property type="method" value="EM"/>
    <property type="resolution" value="3.03 A"/>
    <property type="chains" value="O=1-258"/>
</dbReference>
<dbReference type="PDB" id="8K2A">
    <property type="method" value="EM"/>
    <property type="resolution" value="2.90 A"/>
    <property type="chains" value="SS=1-258"/>
</dbReference>
<dbReference type="PDB" id="8OIR">
    <property type="method" value="EM"/>
    <property type="resolution" value="3.10 A"/>
    <property type="chains" value="AO=1-258"/>
</dbReference>
<dbReference type="PDB" id="8OIS">
    <property type="method" value="EM"/>
    <property type="resolution" value="3.00 A"/>
    <property type="chains" value="AO=1-258"/>
</dbReference>
<dbReference type="PDB" id="8QRK">
    <property type="method" value="EM"/>
    <property type="resolution" value="6.69 A"/>
    <property type="chains" value="O=1-258"/>
</dbReference>
<dbReference type="PDB" id="8QRL">
    <property type="method" value="EM"/>
    <property type="resolution" value="3.34 A"/>
    <property type="chains" value="O=1-258"/>
</dbReference>
<dbReference type="PDB" id="8QRM">
    <property type="method" value="EM"/>
    <property type="resolution" value="3.05 A"/>
    <property type="chains" value="O=1-258"/>
</dbReference>
<dbReference type="PDB" id="8QRN">
    <property type="method" value="EM"/>
    <property type="resolution" value="2.98 A"/>
    <property type="chains" value="O=1-258"/>
</dbReference>
<dbReference type="PDB" id="8RRI">
    <property type="method" value="EM"/>
    <property type="resolution" value="2.40 A"/>
    <property type="chains" value="AO=1-258"/>
</dbReference>
<dbReference type="PDB" id="8XT0">
    <property type="method" value="EM"/>
    <property type="resolution" value="3.20 A"/>
    <property type="chains" value="SS=1-258"/>
</dbReference>
<dbReference type="PDB" id="8XT2">
    <property type="method" value="EM"/>
    <property type="resolution" value="3.30 A"/>
    <property type="chains" value="SS=1-258"/>
</dbReference>
<dbReference type="PDBsum" id="3J9M"/>
<dbReference type="PDBsum" id="6NU2"/>
<dbReference type="PDBsum" id="6NU3"/>
<dbReference type="PDBsum" id="6RW4"/>
<dbReference type="PDBsum" id="6RW5"/>
<dbReference type="PDBsum" id="6VLZ"/>
<dbReference type="PDBsum" id="6VMI"/>
<dbReference type="PDBsum" id="6ZM5"/>
<dbReference type="PDBsum" id="6ZM6"/>
<dbReference type="PDBsum" id="6ZS9"/>
<dbReference type="PDBsum" id="6ZSA"/>
<dbReference type="PDBsum" id="6ZSB"/>
<dbReference type="PDBsum" id="6ZSC"/>
<dbReference type="PDBsum" id="6ZSD"/>
<dbReference type="PDBsum" id="6ZSE"/>
<dbReference type="PDBsum" id="6ZSG"/>
<dbReference type="PDBsum" id="7A5F"/>
<dbReference type="PDBsum" id="7A5G"/>
<dbReference type="PDBsum" id="7A5I"/>
<dbReference type="PDBsum" id="7A5K"/>
<dbReference type="PDBsum" id="7L08"/>
<dbReference type="PDBsum" id="7OG4"/>
<dbReference type="PDBsum" id="7P2E"/>
<dbReference type="PDBsum" id="7PNX"/>
<dbReference type="PDBsum" id="7PNY"/>
<dbReference type="PDBsum" id="7PNZ"/>
<dbReference type="PDBsum" id="7PO0"/>
<dbReference type="PDBsum" id="7PO1"/>
<dbReference type="PDBsum" id="7PO2"/>
<dbReference type="PDBsum" id="7PO3"/>
<dbReference type="PDBsum" id="7QI4"/>
<dbReference type="PDBsum" id="7QI5"/>
<dbReference type="PDBsum" id="7QI6"/>
<dbReference type="PDBsum" id="8ANY"/>
<dbReference type="PDBsum" id="8CSP"/>
<dbReference type="PDBsum" id="8CSQ"/>
<dbReference type="PDBsum" id="8CSR"/>
<dbReference type="PDBsum" id="8CSS"/>
<dbReference type="PDBsum" id="8CST"/>
<dbReference type="PDBsum" id="8CSU"/>
<dbReference type="PDBsum" id="8K2A"/>
<dbReference type="PDBsum" id="8OIR"/>
<dbReference type="PDBsum" id="8OIS"/>
<dbReference type="PDBsum" id="8QRK"/>
<dbReference type="PDBsum" id="8QRL"/>
<dbReference type="PDBsum" id="8QRM"/>
<dbReference type="PDBsum" id="8QRN"/>
<dbReference type="PDBsum" id="8RRI"/>
<dbReference type="PDBsum" id="8XT0"/>
<dbReference type="PDBsum" id="8XT2"/>
<dbReference type="EMDB" id="EMD-0514"/>
<dbReference type="EMDB" id="EMD-0515"/>
<dbReference type="EMDB" id="EMD-10021"/>
<dbReference type="EMDB" id="EMD-10022"/>
<dbReference type="EMDB" id="EMD-11278"/>
<dbReference type="EMDB" id="EMD-11279"/>
<dbReference type="EMDB" id="EMD-11390"/>
<dbReference type="EMDB" id="EMD-11391"/>
<dbReference type="EMDB" id="EMD-11392"/>
<dbReference type="EMDB" id="EMD-11393"/>
<dbReference type="EMDB" id="EMD-11394"/>
<dbReference type="EMDB" id="EMD-11395"/>
<dbReference type="EMDB" id="EMD-11397"/>
<dbReference type="EMDB" id="EMD-11641"/>
<dbReference type="EMDB" id="EMD-11642"/>
<dbReference type="EMDB" id="EMD-11644"/>
<dbReference type="EMDB" id="EMD-11646"/>
<dbReference type="EMDB" id="EMD-12877"/>
<dbReference type="EMDB" id="EMD-13170"/>
<dbReference type="EMDB" id="EMD-13555"/>
<dbReference type="EMDB" id="EMD-13556"/>
<dbReference type="EMDB" id="EMD-13557"/>
<dbReference type="EMDB" id="EMD-13558"/>
<dbReference type="EMDB" id="EMD-13559"/>
<dbReference type="EMDB" id="EMD-13560"/>
<dbReference type="EMDB" id="EMD-13561"/>
<dbReference type="EMDB" id="EMD-13980"/>
<dbReference type="EMDB" id="EMD-13981"/>
<dbReference type="EMDB" id="EMD-13982"/>
<dbReference type="EMDB" id="EMD-15544"/>
<dbReference type="EMDB" id="EMD-16897"/>
<dbReference type="EMDB" id="EMD-16898"/>
<dbReference type="EMDB" id="EMD-19460"/>
<dbReference type="EMDB" id="EMD-21233"/>
<dbReference type="EMDB" id="EMD-21242"/>
<dbReference type="EMDB" id="EMD-23096"/>
<dbReference type="EMDB" id="EMD-26966"/>
<dbReference type="EMDB" id="EMD-26967"/>
<dbReference type="EMDB" id="EMD-26968"/>
<dbReference type="EMDB" id="EMD-26969"/>
<dbReference type="EMDB" id="EMD-26970"/>
<dbReference type="EMDB" id="EMD-26971"/>
<dbReference type="EMDB" id="EMD-36836"/>
<dbReference type="EMDB" id="EMD-38632"/>
<dbReference type="EMDB" id="EMD-38634"/>
<dbReference type="SMR" id="Q9Y676"/>
<dbReference type="BioGRID" id="118797">
    <property type="interactions" value="323"/>
</dbReference>
<dbReference type="ComplexPortal" id="CPX-5225">
    <property type="entry name" value="28S mitochondrial small ribosomal subunit"/>
</dbReference>
<dbReference type="CORUM" id="Q9Y676"/>
<dbReference type="DIP" id="DIP-29894N"/>
<dbReference type="FunCoup" id="Q9Y676">
    <property type="interactions" value="707"/>
</dbReference>
<dbReference type="IntAct" id="Q9Y676">
    <property type="interactions" value="172"/>
</dbReference>
<dbReference type="MINT" id="Q9Y676"/>
<dbReference type="STRING" id="9606.ENSP00000259873"/>
<dbReference type="GlyGen" id="Q9Y676">
    <property type="glycosylation" value="1 site, 1 O-linked glycan (1 site)"/>
</dbReference>
<dbReference type="iPTMnet" id="Q9Y676"/>
<dbReference type="PhosphoSitePlus" id="Q9Y676"/>
<dbReference type="SwissPalm" id="Q9Y676"/>
<dbReference type="BioMuta" id="MRPS18B"/>
<dbReference type="DMDM" id="24212203"/>
<dbReference type="jPOST" id="Q9Y676"/>
<dbReference type="MassIVE" id="Q9Y676"/>
<dbReference type="PaxDb" id="9606-ENSP00000259873"/>
<dbReference type="PeptideAtlas" id="Q9Y676"/>
<dbReference type="ProteomicsDB" id="86614"/>
<dbReference type="Pumba" id="Q9Y676"/>
<dbReference type="Antibodypedia" id="26399">
    <property type="antibodies" value="85 antibodies from 23 providers"/>
</dbReference>
<dbReference type="DNASU" id="28973"/>
<dbReference type="Ensembl" id="ENST00000259873.5">
    <property type="protein sequence ID" value="ENSP00000259873.4"/>
    <property type="gene ID" value="ENSG00000204568.12"/>
</dbReference>
<dbReference type="Ensembl" id="ENST00000327800.10">
    <property type="protein sequence ID" value="ENSP00000383438.3"/>
    <property type="gene ID" value="ENSG00000203624.10"/>
</dbReference>
<dbReference type="Ensembl" id="ENST00000412451.6">
    <property type="protein sequence ID" value="ENSP00000402718.2"/>
    <property type="gene ID" value="ENSG00000223775.8"/>
</dbReference>
<dbReference type="Ensembl" id="ENST00000426945.6">
    <property type="protein sequence ID" value="ENSP00000397790.2"/>
    <property type="gene ID" value="ENSG00000229861.8"/>
</dbReference>
<dbReference type="Ensembl" id="ENST00000430402.6">
    <property type="protein sequence ID" value="ENSP00000398494.2"/>
    <property type="gene ID" value="ENSG00000233813.8"/>
</dbReference>
<dbReference type="Ensembl" id="ENST00000451032.6">
    <property type="protein sequence ID" value="ENSP00000415703.2"/>
    <property type="gene ID" value="ENSG00000226111.8"/>
</dbReference>
<dbReference type="Ensembl" id="ENST00000454427.6">
    <property type="protein sequence ID" value="ENSP00000414972.2"/>
    <property type="gene ID" value="ENSG00000227420.8"/>
</dbReference>
<dbReference type="GeneID" id="28973"/>
<dbReference type="KEGG" id="hsa:28973"/>
<dbReference type="MANE-Select" id="ENST00000259873.5">
    <property type="protein sequence ID" value="ENSP00000259873.4"/>
    <property type="RefSeq nucleotide sequence ID" value="NM_014046.4"/>
    <property type="RefSeq protein sequence ID" value="NP_054765.1"/>
</dbReference>
<dbReference type="UCSC" id="uc003nqo.3">
    <property type="organism name" value="human"/>
</dbReference>
<dbReference type="AGR" id="HGNC:14516"/>
<dbReference type="CTD" id="28973"/>
<dbReference type="DisGeNET" id="28973"/>
<dbReference type="GeneCards" id="MRPS18B"/>
<dbReference type="HGNC" id="HGNC:14516">
    <property type="gene designation" value="MRPS18B"/>
</dbReference>
<dbReference type="HPA" id="ENSG00000204568">
    <property type="expression patterns" value="Low tissue specificity"/>
</dbReference>
<dbReference type="MIM" id="611982">
    <property type="type" value="gene"/>
</dbReference>
<dbReference type="neXtProt" id="NX_Q9Y676"/>
<dbReference type="OpenTargets" id="ENSG00000204568"/>
<dbReference type="PharmGKB" id="PA31004"/>
<dbReference type="VEuPathDB" id="HostDB:ENSG00000204568"/>
<dbReference type="eggNOG" id="KOG4021">
    <property type="taxonomic scope" value="Eukaryota"/>
</dbReference>
<dbReference type="GeneTree" id="ENSGT00390000010554"/>
<dbReference type="HOGENOM" id="CLU_089746_0_0_1"/>
<dbReference type="InParanoid" id="Q9Y676"/>
<dbReference type="OMA" id="RSAYGVQ"/>
<dbReference type="OrthoDB" id="21463at2759"/>
<dbReference type="PAN-GO" id="Q9Y676">
    <property type="GO annotations" value="1 GO annotation based on evolutionary models"/>
</dbReference>
<dbReference type="PhylomeDB" id="Q9Y676"/>
<dbReference type="TreeFam" id="TF315059"/>
<dbReference type="PathwayCommons" id="Q9Y676"/>
<dbReference type="Reactome" id="R-HSA-5368286">
    <property type="pathway name" value="Mitochondrial translation initiation"/>
</dbReference>
<dbReference type="Reactome" id="R-HSA-5389840">
    <property type="pathway name" value="Mitochondrial translation elongation"/>
</dbReference>
<dbReference type="Reactome" id="R-HSA-5419276">
    <property type="pathway name" value="Mitochondrial translation termination"/>
</dbReference>
<dbReference type="SignaLink" id="Q9Y676"/>
<dbReference type="SIGNOR" id="Q9Y676"/>
<dbReference type="BioGRID-ORCS" id="28973">
    <property type="hits" value="335 hits in 1163 CRISPR screens"/>
</dbReference>
<dbReference type="ChiTaRS" id="MRPS18B">
    <property type="organism name" value="human"/>
</dbReference>
<dbReference type="GeneWiki" id="MRPS18B"/>
<dbReference type="GenomeRNAi" id="28973"/>
<dbReference type="Pharos" id="Q9Y676">
    <property type="development level" value="Tbio"/>
</dbReference>
<dbReference type="PRO" id="PR:Q9Y676"/>
<dbReference type="Proteomes" id="UP000005640">
    <property type="component" value="Chromosome 6"/>
</dbReference>
<dbReference type="RNAct" id="Q9Y676">
    <property type="molecule type" value="protein"/>
</dbReference>
<dbReference type="Bgee" id="ENSG00000204568">
    <property type="expression patterns" value="Expressed in gastrocnemius and 100 other cell types or tissues"/>
</dbReference>
<dbReference type="ExpressionAtlas" id="Q9Y676">
    <property type="expression patterns" value="baseline and differential"/>
</dbReference>
<dbReference type="GO" id="GO:0030054">
    <property type="term" value="C:cell junction"/>
    <property type="evidence" value="ECO:0000314"/>
    <property type="project" value="HPA"/>
</dbReference>
<dbReference type="GO" id="GO:0005743">
    <property type="term" value="C:mitochondrial inner membrane"/>
    <property type="evidence" value="ECO:0000304"/>
    <property type="project" value="Reactome"/>
</dbReference>
<dbReference type="GO" id="GO:0005763">
    <property type="term" value="C:mitochondrial small ribosomal subunit"/>
    <property type="evidence" value="ECO:0000314"/>
    <property type="project" value="UniProtKB"/>
</dbReference>
<dbReference type="GO" id="GO:0005739">
    <property type="term" value="C:mitochondrion"/>
    <property type="evidence" value="ECO:0000314"/>
    <property type="project" value="HPA"/>
</dbReference>
<dbReference type="GO" id="GO:0005654">
    <property type="term" value="C:nucleoplasm"/>
    <property type="evidence" value="ECO:0000314"/>
    <property type="project" value="HPA"/>
</dbReference>
<dbReference type="GO" id="GO:0003735">
    <property type="term" value="F:structural constituent of ribosome"/>
    <property type="evidence" value="ECO:0000250"/>
    <property type="project" value="UniProtKB"/>
</dbReference>
<dbReference type="GO" id="GO:0032543">
    <property type="term" value="P:mitochondrial translation"/>
    <property type="evidence" value="ECO:0000250"/>
    <property type="project" value="UniProtKB"/>
</dbReference>
<dbReference type="GO" id="GO:0006412">
    <property type="term" value="P:translation"/>
    <property type="evidence" value="ECO:0000303"/>
    <property type="project" value="UniProtKB"/>
</dbReference>
<dbReference type="FunFam" id="4.10.640.10:FF:000008">
    <property type="entry name" value="28S ribosomal protein S18b, mitochondrial"/>
    <property type="match status" value="1"/>
</dbReference>
<dbReference type="Gene3D" id="4.10.640.10">
    <property type="entry name" value="Ribosomal protein S18"/>
    <property type="match status" value="1"/>
</dbReference>
<dbReference type="InterPro" id="IPR040054">
    <property type="entry name" value="MRPS18B"/>
</dbReference>
<dbReference type="InterPro" id="IPR001648">
    <property type="entry name" value="Ribosomal_bS18"/>
</dbReference>
<dbReference type="InterPro" id="IPR036870">
    <property type="entry name" value="Ribosomal_bS18_sf"/>
</dbReference>
<dbReference type="PANTHER" id="PTHR13329">
    <property type="entry name" value="MITOCHONDRIAL RIBOSOMAL PROTEIN S18B"/>
    <property type="match status" value="1"/>
</dbReference>
<dbReference type="PANTHER" id="PTHR13329:SF2">
    <property type="entry name" value="SMALL RIBOSOMAL SUBUNIT PROTEIN MS40"/>
    <property type="match status" value="1"/>
</dbReference>
<dbReference type="Pfam" id="PF01084">
    <property type="entry name" value="Ribosomal_S18"/>
    <property type="match status" value="1"/>
</dbReference>
<dbReference type="SUPFAM" id="SSF46911">
    <property type="entry name" value="Ribosomal protein S18"/>
    <property type="match status" value="1"/>
</dbReference>
<evidence type="ECO:0000250" key="1">
    <source>
        <dbReference type="UniProtKB" id="P82918"/>
    </source>
</evidence>
<evidence type="ECO:0000256" key="2">
    <source>
        <dbReference type="SAM" id="MobiDB-lite"/>
    </source>
</evidence>
<evidence type="ECO:0000269" key="3">
    <source>
    </source>
</evidence>
<evidence type="ECO:0000303" key="4">
    <source>
    </source>
</evidence>
<evidence type="ECO:0000303" key="5">
    <source>
    </source>
</evidence>
<evidence type="ECO:0000305" key="6"/>
<evidence type="ECO:0000305" key="7">
    <source>
    </source>
</evidence>
<evidence type="ECO:0000312" key="8">
    <source>
        <dbReference type="EMBL" id="AAF36103.1"/>
    </source>
</evidence>
<evidence type="ECO:0007744" key="9">
    <source>
        <dbReference type="PDB" id="3J9M"/>
    </source>
</evidence>
<evidence type="ECO:0007744" key="10">
    <source>
    </source>
</evidence>
<evidence type="ECO:0007829" key="11">
    <source>
        <dbReference type="PDB" id="8CSS"/>
    </source>
</evidence>
<proteinExistence type="evidence at protein level"/>
<sequence length="258" mass="29396">MAASVLNTVLRRLPMLSLFRGSHRVQVPLQTLCTKAPSEEDSLSSVPISPYKDEPWKYLESEEYQERYGSRPVWADYRRNHKGGVPPQRTRKTCIRRNKVVGNPCPICRDHKLHVDFRNVKLLEQFVCAHTGIIFYAPYTGVCVKQHKRLTQAIQKARDHGLLIYHIPQVEPRDLDFSTSHGAVSATPPAPTLVSGDPWYPWYNWKQPPERELSRLRRLYQGHLQEESGPPPESMPKMPPRTPAEASSTGQTGPQSAL</sequence>
<feature type="transit peptide" description="Mitochondrion" evidence="1">
    <location>
        <begin position="1"/>
        <end position="35"/>
    </location>
</feature>
<feature type="chain" id="PRO_0000030627" description="Small ribosomal subunit protein mS40">
    <location>
        <begin position="36"/>
        <end position="258"/>
    </location>
</feature>
<feature type="region of interest" description="Disordered" evidence="2">
    <location>
        <begin position="214"/>
        <end position="258"/>
    </location>
</feature>
<feature type="compositionally biased region" description="Pro residues" evidence="2">
    <location>
        <begin position="229"/>
        <end position="242"/>
    </location>
</feature>
<feature type="compositionally biased region" description="Polar residues" evidence="2">
    <location>
        <begin position="245"/>
        <end position="258"/>
    </location>
</feature>
<feature type="modified residue" description="Phosphoserine" evidence="10">
    <location>
        <position position="38"/>
    </location>
</feature>
<feature type="modified residue" description="Phosphoserine" evidence="10">
    <location>
        <position position="49"/>
    </location>
</feature>
<feature type="sequence variant" id="VAR_052056" description="In dbSNP:rs34315095.">
    <original>P</original>
    <variation>A</variation>
    <location>
        <position position="230"/>
    </location>
</feature>
<feature type="sequence conflict" description="In Ref. 7; AAH05373." evidence="6" ref="7">
    <original>G</original>
    <variation>S</variation>
    <location>
        <position position="196"/>
    </location>
</feature>
<feature type="strand" evidence="11">
    <location>
        <begin position="52"/>
        <end position="54"/>
    </location>
</feature>
<feature type="helix" evidence="11">
    <location>
        <begin position="55"/>
        <end position="59"/>
    </location>
</feature>
<feature type="helix" evidence="11">
    <location>
        <begin position="62"/>
        <end position="68"/>
    </location>
</feature>
<feature type="turn" evidence="11">
    <location>
        <begin position="73"/>
        <end position="76"/>
    </location>
</feature>
<feature type="strand" evidence="11">
    <location>
        <begin position="82"/>
        <end position="85"/>
    </location>
</feature>
<feature type="strand" evidence="11">
    <location>
        <begin position="94"/>
        <end position="98"/>
    </location>
</feature>
<feature type="turn" evidence="11">
    <location>
        <begin position="106"/>
        <end position="109"/>
    </location>
</feature>
<feature type="helix" evidence="11">
    <location>
        <begin position="120"/>
        <end position="124"/>
    </location>
</feature>
<feature type="turn" evidence="11">
    <location>
        <begin position="129"/>
        <end position="131"/>
    </location>
</feature>
<feature type="helix" evidence="11">
    <location>
        <begin position="137"/>
        <end position="140"/>
    </location>
</feature>
<feature type="helix" evidence="11">
    <location>
        <begin position="144"/>
        <end position="159"/>
    </location>
</feature>
<feature type="turn" evidence="11">
    <location>
        <begin position="182"/>
        <end position="184"/>
    </location>
</feature>
<feature type="helix" evidence="11">
    <location>
        <begin position="191"/>
        <end position="195"/>
    </location>
</feature>
<feature type="helix" evidence="11">
    <location>
        <begin position="201"/>
        <end position="203"/>
    </location>
</feature>
<feature type="helix" evidence="11">
    <location>
        <begin position="210"/>
        <end position="219"/>
    </location>
</feature>
<feature type="turn" evidence="11">
    <location>
        <begin position="220"/>
        <end position="222"/>
    </location>
</feature>
<comment type="subunit">
    <text evidence="3">Component of the mitochondrial small ribosomal subunit (mt-SSU). Mature mammalian 55S mitochondrial ribosomes consist of a small (28S) and a large (39S) subunit. The 28S small subunit contains a 12S ribosomal RNA (12S mt-rRNA) and 30 different proteins. The 39S large subunit contains a 16S rRNA (16S mt-rRNA), a copy of mitochondrial valine transfer RNA (mt-tRNA(Val)), which plays an integral structural role, and 52 different proteins. mS40 has a zinc binding site.</text>
</comment>
<comment type="interaction">
    <interactant intactId="EBI-750085">
        <id>Q9Y676</id>
    </interactant>
    <interactant intactId="EBI-3922513">
        <id>O95393</id>
        <label>BMP10</label>
    </interactant>
    <organismsDiffer>false</organismsDiffer>
    <experiments>3</experiments>
</comment>
<comment type="interaction">
    <interactant intactId="EBI-750085">
        <id>Q9Y676</id>
    </interactant>
    <interactant intactId="EBI-712921">
        <id>P60033</id>
        <label>CD81</label>
    </interactant>
    <organismsDiffer>false</organismsDiffer>
    <experiments>3</experiments>
</comment>
<comment type="interaction">
    <interactant intactId="EBI-750085">
        <id>Q9Y676</id>
    </interactant>
    <interactant intactId="EBI-11996768">
        <id>Q8NC01</id>
        <label>CLEC1A</label>
    </interactant>
    <organismsDiffer>false</organismsDiffer>
    <experiments>3</experiments>
</comment>
<comment type="interaction">
    <interactant intactId="EBI-750085">
        <id>Q9Y676</id>
    </interactant>
    <interactant intactId="EBI-720480">
        <id>P24593</id>
        <label>IGFBP5</label>
    </interactant>
    <organismsDiffer>false</organismsDiffer>
    <experiments>3</experiments>
</comment>
<comment type="interaction">
    <interactant intactId="EBI-750085">
        <id>Q9Y676</id>
    </interactant>
    <interactant intactId="EBI-8070286">
        <id>O43561-2</id>
        <label>LAT</label>
    </interactant>
    <organismsDiffer>false</organismsDiffer>
    <experiments>3</experiments>
</comment>
<comment type="interaction">
    <interactant intactId="EBI-750085">
        <id>Q9Y676</id>
    </interactant>
    <interactant intactId="EBI-2830349">
        <id>Q7Z4F1</id>
        <label>LRP10</label>
    </interactant>
    <organismsDiffer>false</organismsDiffer>
    <experiments>3</experiments>
</comment>
<comment type="interaction">
    <interactant intactId="EBI-750085">
        <id>Q9Y676</id>
    </interactant>
    <interactant intactId="EBI-8449636">
        <id>P30301</id>
        <label>MIP</label>
    </interactant>
    <organismsDiffer>false</organismsDiffer>
    <experiments>3</experiments>
</comment>
<comment type="interaction">
    <interactant intactId="EBI-750085">
        <id>Q9Y676</id>
    </interactant>
    <interactant intactId="EBI-1050752">
        <id>P82650</id>
        <label>MRPS22</label>
    </interactant>
    <organismsDiffer>false</organismsDiffer>
    <experiments>5</experiments>
</comment>
<comment type="interaction">
    <interactant intactId="EBI-750085">
        <id>Q9Y676</id>
    </interactant>
    <interactant intactId="EBI-2211879">
        <id>Q92552</id>
        <label>MRPS27</label>
    </interactant>
    <organismsDiffer>false</organismsDiffer>
    <experiments>7</experiments>
</comment>
<comment type="interaction">
    <interactant intactId="EBI-750085">
        <id>Q9Y676</id>
    </interactant>
    <interactant intactId="EBI-491274">
        <id>P06400</id>
        <label>RB1</label>
    </interactant>
    <organismsDiffer>false</organismsDiffer>
    <experiments>2</experiments>
</comment>
<comment type="interaction">
    <interactant intactId="EBI-750085">
        <id>Q9Y676</id>
    </interactant>
    <interactant intactId="EBI-1058865">
        <id>O75396</id>
        <label>SEC22B</label>
    </interactant>
    <organismsDiffer>false</organismsDiffer>
    <experiments>3</experiments>
</comment>
<comment type="interaction">
    <interactant intactId="EBI-750085">
        <id>Q9Y676</id>
    </interactant>
    <interactant intactId="EBI-12870360">
        <id>P78382</id>
        <label>SLC35A1</label>
    </interactant>
    <organismsDiffer>false</organismsDiffer>
    <experiments>3</experiments>
</comment>
<comment type="interaction">
    <interactant intactId="EBI-750085">
        <id>Q9Y676</id>
    </interactant>
    <interactant intactId="EBI-13075176">
        <id>Q8N2H4</id>
        <label>SYS1</label>
    </interactant>
    <organismsDiffer>false</organismsDiffer>
    <experiments>3</experiments>
</comment>
<comment type="interaction">
    <interactant intactId="EBI-750085">
        <id>Q9Y676</id>
    </interactant>
    <interactant intactId="EBI-11603430">
        <id>Q6PL24</id>
        <label>TMED8</label>
    </interactant>
    <organismsDiffer>false</organismsDiffer>
    <experiments>3</experiments>
</comment>
<comment type="interaction">
    <interactant intactId="EBI-750085">
        <id>Q9Y676</id>
    </interactant>
    <interactant intactId="EBI-10171534">
        <id>A0PK00</id>
        <label>TMEM120B</label>
    </interactant>
    <organismsDiffer>false</organismsDiffer>
    <experiments>3</experiments>
</comment>
<comment type="interaction">
    <interactant intactId="EBI-750085">
        <id>Q9Y676</id>
    </interactant>
    <interactant intactId="EBI-10694905">
        <id>Q5BJH2-2</id>
        <label>TMEM128</label>
    </interactant>
    <organismsDiffer>false</organismsDiffer>
    <experiments>3</experiments>
</comment>
<comment type="interaction">
    <interactant intactId="EBI-750085">
        <id>Q9Y676</id>
    </interactant>
    <interactant intactId="EBI-717441">
        <id>O14798</id>
        <label>TNFRSF10C</label>
    </interactant>
    <organismsDiffer>false</organismsDiffer>
    <experiments>3</experiments>
</comment>
<comment type="interaction">
    <interactant intactId="EBI-750085">
        <id>Q9Y676</id>
    </interactant>
    <interactant intactId="EBI-11988865">
        <id>A5PKU2</id>
        <label>TUSC5</label>
    </interactant>
    <organismsDiffer>false</organismsDiffer>
    <experiments>3</experiments>
</comment>
<comment type="interaction">
    <interactant intactId="EBI-750085">
        <id>Q9Y676</id>
    </interactant>
    <interactant intactId="EBI-718439">
        <id>O95159</id>
        <label>ZFPL1</label>
    </interactant>
    <organismsDiffer>false</organismsDiffer>
    <experiments>3</experiments>
</comment>
<comment type="interaction">
    <interactant intactId="EBI-750085">
        <id>Q9Y676</id>
    </interactant>
    <interactant intactId="EBI-9255985">
        <id>P03204</id>
        <label>EBNA6</label>
    </interactant>
    <organismsDiffer>true</organismsDiffer>
    <experiments>6</experiments>
</comment>
<comment type="subcellular location">
    <subcellularLocation>
        <location evidence="3">Mitochondrion</location>
    </subcellularLocation>
</comment>
<comment type="miscellaneous">
    <text evidence="7">There are 3 mitochondrial isoforms of bS18 in mammalia, localizing to 3 distinct sites in the mitoribosome. bS18m (bs18c) binds to the same site as bacterial bS18, mS40 (bS18b, this protein) binds to a novel location of the 28S small subunit, and mL66 (bS18a) binds to the 39S large subunit.</text>
</comment>
<comment type="similarity">
    <text evidence="6">Belongs to the bacterial ribosomal protein bS18 family. Mitochondrion-specific ribosomal protein mS40 subfamily.</text>
</comment>